<evidence type="ECO:0000255" key="1">
    <source>
        <dbReference type="HAMAP-Rule" id="MF_00671"/>
    </source>
</evidence>
<keyword id="KW-0131">Cell cycle</keyword>
<keyword id="KW-0132">Cell division</keyword>
<keyword id="KW-0574">Periplasm</keyword>
<keyword id="KW-0732">Signal</keyword>
<name>TOLB_SHEPW</name>
<protein>
    <recommendedName>
        <fullName evidence="1">Tol-Pal system protein TolB</fullName>
    </recommendedName>
</protein>
<reference key="1">
    <citation type="journal article" date="2008" name="PLoS ONE">
        <title>Environmental adaptation: genomic analysis of the piezotolerant and psychrotolerant deep-sea iron reducing bacterium Shewanella piezotolerans WP3.</title>
        <authorList>
            <person name="Wang F."/>
            <person name="Wang J."/>
            <person name="Jian H."/>
            <person name="Zhang B."/>
            <person name="Li S."/>
            <person name="Wang F."/>
            <person name="Zeng X."/>
            <person name="Gao L."/>
            <person name="Bartlett D.H."/>
            <person name="Yu J."/>
            <person name="Hu S."/>
            <person name="Xiao X."/>
        </authorList>
    </citation>
    <scope>NUCLEOTIDE SEQUENCE [LARGE SCALE GENOMIC DNA]</scope>
    <source>
        <strain>WP3 / JCM 13877</strain>
    </source>
</reference>
<feature type="signal peptide" evidence="1">
    <location>
        <begin position="1"/>
        <end position="21"/>
    </location>
</feature>
<feature type="chain" id="PRO_1000131536" description="Tol-Pal system protein TolB" evidence="1">
    <location>
        <begin position="22"/>
        <end position="442"/>
    </location>
</feature>
<comment type="function">
    <text evidence="1">Part of the Tol-Pal system, which plays a role in outer membrane invagination during cell division and is important for maintaining outer membrane integrity.</text>
</comment>
<comment type="subunit">
    <text evidence="1">The Tol-Pal system is composed of five core proteins: the inner membrane proteins TolA, TolQ and TolR, the periplasmic protein TolB and the outer membrane protein Pal. They form a network linking the inner and outer membranes and the peptidoglycan layer.</text>
</comment>
<comment type="subcellular location">
    <subcellularLocation>
        <location evidence="1">Periplasm</location>
    </subcellularLocation>
</comment>
<comment type="similarity">
    <text evidence="1">Belongs to the TolB family.</text>
</comment>
<dbReference type="EMBL" id="CP000472">
    <property type="protein sequence ID" value="ACJ28595.1"/>
    <property type="molecule type" value="Genomic_DNA"/>
</dbReference>
<dbReference type="RefSeq" id="WP_020911973.1">
    <property type="nucleotide sequence ID" value="NC_011566.1"/>
</dbReference>
<dbReference type="SMR" id="B8CLE4"/>
<dbReference type="STRING" id="225849.swp_1831"/>
<dbReference type="KEGG" id="swp:swp_1831"/>
<dbReference type="eggNOG" id="COG0823">
    <property type="taxonomic scope" value="Bacteria"/>
</dbReference>
<dbReference type="HOGENOM" id="CLU_047123_0_0_6"/>
<dbReference type="OrthoDB" id="9802240at2"/>
<dbReference type="Proteomes" id="UP000000753">
    <property type="component" value="Chromosome"/>
</dbReference>
<dbReference type="GO" id="GO:0042597">
    <property type="term" value="C:periplasmic space"/>
    <property type="evidence" value="ECO:0007669"/>
    <property type="project" value="UniProtKB-SubCell"/>
</dbReference>
<dbReference type="GO" id="GO:0051301">
    <property type="term" value="P:cell division"/>
    <property type="evidence" value="ECO:0007669"/>
    <property type="project" value="UniProtKB-UniRule"/>
</dbReference>
<dbReference type="GO" id="GO:0017038">
    <property type="term" value="P:protein import"/>
    <property type="evidence" value="ECO:0007669"/>
    <property type="project" value="InterPro"/>
</dbReference>
<dbReference type="Gene3D" id="2.120.10.30">
    <property type="entry name" value="TolB, C-terminal domain"/>
    <property type="match status" value="1"/>
</dbReference>
<dbReference type="Gene3D" id="3.40.50.10070">
    <property type="entry name" value="TolB, N-terminal domain"/>
    <property type="match status" value="1"/>
</dbReference>
<dbReference type="HAMAP" id="MF_00671">
    <property type="entry name" value="TolB"/>
    <property type="match status" value="1"/>
</dbReference>
<dbReference type="InterPro" id="IPR011042">
    <property type="entry name" value="6-blade_b-propeller_TolB-like"/>
</dbReference>
<dbReference type="InterPro" id="IPR011659">
    <property type="entry name" value="PD40"/>
</dbReference>
<dbReference type="InterPro" id="IPR014167">
    <property type="entry name" value="Tol-Pal_TolB"/>
</dbReference>
<dbReference type="InterPro" id="IPR007195">
    <property type="entry name" value="TolB_N"/>
</dbReference>
<dbReference type="NCBIfam" id="TIGR02800">
    <property type="entry name" value="propeller_TolB"/>
    <property type="match status" value="1"/>
</dbReference>
<dbReference type="PANTHER" id="PTHR36842:SF1">
    <property type="entry name" value="PROTEIN TOLB"/>
    <property type="match status" value="1"/>
</dbReference>
<dbReference type="PANTHER" id="PTHR36842">
    <property type="entry name" value="PROTEIN TOLB HOMOLOG"/>
    <property type="match status" value="1"/>
</dbReference>
<dbReference type="Pfam" id="PF07676">
    <property type="entry name" value="PD40"/>
    <property type="match status" value="4"/>
</dbReference>
<dbReference type="Pfam" id="PF04052">
    <property type="entry name" value="TolB_N"/>
    <property type="match status" value="1"/>
</dbReference>
<dbReference type="SUPFAM" id="SSF52964">
    <property type="entry name" value="TolB, N-terminal domain"/>
    <property type="match status" value="1"/>
</dbReference>
<dbReference type="SUPFAM" id="SSF69304">
    <property type="entry name" value="Tricorn protease N-terminal domain"/>
    <property type="match status" value="1"/>
</dbReference>
<organism>
    <name type="scientific">Shewanella piezotolerans (strain WP3 / JCM 13877)</name>
    <dbReference type="NCBI Taxonomy" id="225849"/>
    <lineage>
        <taxon>Bacteria</taxon>
        <taxon>Pseudomonadati</taxon>
        <taxon>Pseudomonadota</taxon>
        <taxon>Gammaproteobacteria</taxon>
        <taxon>Alteromonadales</taxon>
        <taxon>Shewanellaceae</taxon>
        <taxon>Shewanella</taxon>
    </lineage>
</organism>
<accession>B8CLE4</accession>
<proteinExistence type="inferred from homology"/>
<sequence>MKILGKWLLASLLICSMPAKAALDIVITEGVDAARPIAVVPFVWQGTGPMPSQISDVVMSDLARSGTFSPSDELSLPQRNISTLAQFDAKAWMAQPAEAVVMGSIKPYGADKYLVSFQLIDLVKAQLQSGAGPQAANDLVIDSRETVISAAQFRQYGHRISDVVYEKLTGIRGAFLTRIAYVVVKHGEKSPYQLMISDYDGYNEQMLLRSPEPLMSPSWSPDGQQLAYVSFENRKAEVFVQNIYTQARKKVTSFNGINGAPVFSPDGKKLALTLSKDGQPDIYVVDIATSALKRVTNHYSIDTEPSWFPDGKSLLLTSERGGRPQLYRVFLDSGKISRLTFEGEWNLGGSIAPDGRSIVFVNRTNGKFNIARMDLETRFMQVLTSTRLDESPSLAPNGTMVIYGTTYQGKQVLAAVSMDGRFKARLPVGQGEVKSPSWSPFL</sequence>
<gene>
    <name evidence="1" type="primary">tolB</name>
    <name type="ordered locus">swp_1831</name>
</gene>